<name>G6PI_ECOL5</name>
<protein>
    <recommendedName>
        <fullName evidence="1">Glucose-6-phosphate isomerase</fullName>
        <shortName evidence="1">GPI</shortName>
        <ecNumber evidence="1">5.3.1.9</ecNumber>
    </recommendedName>
    <alternativeName>
        <fullName evidence="1">Phosphoglucose isomerase</fullName>
        <shortName evidence="1">PGI</shortName>
    </alternativeName>
    <alternativeName>
        <fullName evidence="1">Phosphohexose isomerase</fullName>
        <shortName evidence="1">PHI</shortName>
    </alternativeName>
</protein>
<feature type="chain" id="PRO_0000252620" description="Glucose-6-phosphate isomerase">
    <location>
        <begin position="1"/>
        <end position="549"/>
    </location>
</feature>
<feature type="active site" description="Proton donor" evidence="1">
    <location>
        <position position="355"/>
    </location>
</feature>
<feature type="active site" evidence="1">
    <location>
        <position position="386"/>
    </location>
</feature>
<feature type="active site" evidence="1">
    <location>
        <position position="514"/>
    </location>
</feature>
<feature type="modified residue" description="N6-acetyllysine" evidence="1">
    <location>
        <position position="80"/>
    </location>
</feature>
<feature type="modified residue" description="N6-acetyllysine" evidence="1">
    <location>
        <position position="228"/>
    </location>
</feature>
<feature type="modified residue" description="N6-acetyllysine" evidence="1">
    <location>
        <position position="234"/>
    </location>
</feature>
<sequence>MKNINPTQTAAWQALQKHFDEMKDVTIADLFAKDGDRFSKFSATFDDQMLVDYSKNRITEETLAKLQDLAKECDLAGAIKSMFSGEKINRTENRAVLHVALRNRSNTPILVDGKDVMPEVNAVLEKMKTFSEAIISGEWKGYTGKAITDVVNIGIGGSDLGPYMVTEALRPYKNHLNMHFVSNVDGTHIAEVLKKVNPETTLFLVASKTFTTQETMTNAHSARDWFLKAAGDEKHVAKHFAALSTNAKAVGEFGIDTANMFEFWDWVGGRYSLWSAIGLSIVLSIGFDNFVELLSGAHAMDKHFSTTPAEKNLPVLLALIGIWYNNFFGAETEAILPYDQYMHRFAAYFQQGNMESNGKYVDRNGKVVDYQTGPIIWGEPGTNGQHAFYQLIHQGTKMVPCDFIAPAITHNPLSDHHQKLLSNFFAQTEALAFGKSREVVEQEYRDQGKDPATLDYVVPFKVFEGNRPTNSILLREITPFSLGALIALYEHKIFTQGVILNIFTFDQWGVELGKQLANRILPELKDDKEISSHDSSTNGLINRYKAWRG</sequence>
<reference key="1">
    <citation type="journal article" date="2006" name="Mol. Microbiol.">
        <title>Role of pathogenicity island-associated integrases in the genome plasticity of uropathogenic Escherichia coli strain 536.</title>
        <authorList>
            <person name="Hochhut B."/>
            <person name="Wilde C."/>
            <person name="Balling G."/>
            <person name="Middendorf B."/>
            <person name="Dobrindt U."/>
            <person name="Brzuszkiewicz E."/>
            <person name="Gottschalk G."/>
            <person name="Carniel E."/>
            <person name="Hacker J."/>
        </authorList>
    </citation>
    <scope>NUCLEOTIDE SEQUENCE [LARGE SCALE GENOMIC DNA]</scope>
    <source>
        <strain>536 / UPEC</strain>
    </source>
</reference>
<accession>Q0TA36</accession>
<proteinExistence type="inferred from homology"/>
<evidence type="ECO:0000255" key="1">
    <source>
        <dbReference type="HAMAP-Rule" id="MF_00473"/>
    </source>
</evidence>
<keyword id="KW-0007">Acetylation</keyword>
<keyword id="KW-0963">Cytoplasm</keyword>
<keyword id="KW-0312">Gluconeogenesis</keyword>
<keyword id="KW-0324">Glycolysis</keyword>
<keyword id="KW-0413">Isomerase</keyword>
<gene>
    <name evidence="1" type="primary">pgi</name>
    <name type="ordered locus">ECP_4243</name>
</gene>
<dbReference type="EC" id="5.3.1.9" evidence="1"/>
<dbReference type="EMBL" id="CP000247">
    <property type="protein sequence ID" value="ABG72193.1"/>
    <property type="molecule type" value="Genomic_DNA"/>
</dbReference>
<dbReference type="RefSeq" id="WP_000789981.1">
    <property type="nucleotide sequence ID" value="NC_008253.1"/>
</dbReference>
<dbReference type="SMR" id="Q0TA36"/>
<dbReference type="KEGG" id="ecp:ECP_4243"/>
<dbReference type="HOGENOM" id="CLU_017947_3_1_6"/>
<dbReference type="UniPathway" id="UPA00109">
    <property type="reaction ID" value="UER00181"/>
</dbReference>
<dbReference type="UniPathway" id="UPA00138"/>
<dbReference type="Proteomes" id="UP000009182">
    <property type="component" value="Chromosome"/>
</dbReference>
<dbReference type="GO" id="GO:0005829">
    <property type="term" value="C:cytosol"/>
    <property type="evidence" value="ECO:0007669"/>
    <property type="project" value="TreeGrafter"/>
</dbReference>
<dbReference type="GO" id="GO:0097367">
    <property type="term" value="F:carbohydrate derivative binding"/>
    <property type="evidence" value="ECO:0007669"/>
    <property type="project" value="InterPro"/>
</dbReference>
<dbReference type="GO" id="GO:0004347">
    <property type="term" value="F:glucose-6-phosphate isomerase activity"/>
    <property type="evidence" value="ECO:0007669"/>
    <property type="project" value="UniProtKB-UniRule"/>
</dbReference>
<dbReference type="GO" id="GO:0048029">
    <property type="term" value="F:monosaccharide binding"/>
    <property type="evidence" value="ECO:0007669"/>
    <property type="project" value="TreeGrafter"/>
</dbReference>
<dbReference type="GO" id="GO:0006094">
    <property type="term" value="P:gluconeogenesis"/>
    <property type="evidence" value="ECO:0007669"/>
    <property type="project" value="UniProtKB-UniRule"/>
</dbReference>
<dbReference type="GO" id="GO:0051156">
    <property type="term" value="P:glucose 6-phosphate metabolic process"/>
    <property type="evidence" value="ECO:0007669"/>
    <property type="project" value="TreeGrafter"/>
</dbReference>
<dbReference type="GO" id="GO:0006096">
    <property type="term" value="P:glycolytic process"/>
    <property type="evidence" value="ECO:0007669"/>
    <property type="project" value="UniProtKB-UniRule"/>
</dbReference>
<dbReference type="CDD" id="cd05015">
    <property type="entry name" value="SIS_PGI_1"/>
    <property type="match status" value="1"/>
</dbReference>
<dbReference type="CDD" id="cd05016">
    <property type="entry name" value="SIS_PGI_2"/>
    <property type="match status" value="1"/>
</dbReference>
<dbReference type="FunFam" id="1.10.1390.10:FF:000001">
    <property type="entry name" value="Glucose-6-phosphate isomerase"/>
    <property type="match status" value="1"/>
</dbReference>
<dbReference type="FunFam" id="3.40.50.10490:FF:000004">
    <property type="entry name" value="Glucose-6-phosphate isomerase"/>
    <property type="match status" value="1"/>
</dbReference>
<dbReference type="Gene3D" id="1.10.1390.10">
    <property type="match status" value="1"/>
</dbReference>
<dbReference type="Gene3D" id="3.40.50.10490">
    <property type="entry name" value="Glucose-6-phosphate isomerase like protein, domain 1"/>
    <property type="match status" value="2"/>
</dbReference>
<dbReference type="HAMAP" id="MF_00473">
    <property type="entry name" value="G6P_isomerase"/>
    <property type="match status" value="1"/>
</dbReference>
<dbReference type="InterPro" id="IPR001672">
    <property type="entry name" value="G6P_Isomerase"/>
</dbReference>
<dbReference type="InterPro" id="IPR023096">
    <property type="entry name" value="G6P_Isomerase_C"/>
</dbReference>
<dbReference type="InterPro" id="IPR018189">
    <property type="entry name" value="Phosphoglucose_isomerase_CS"/>
</dbReference>
<dbReference type="InterPro" id="IPR046348">
    <property type="entry name" value="SIS_dom_sf"/>
</dbReference>
<dbReference type="InterPro" id="IPR035476">
    <property type="entry name" value="SIS_PGI_1"/>
</dbReference>
<dbReference type="InterPro" id="IPR035482">
    <property type="entry name" value="SIS_PGI_2"/>
</dbReference>
<dbReference type="NCBIfam" id="NF001211">
    <property type="entry name" value="PRK00179.1"/>
    <property type="match status" value="1"/>
</dbReference>
<dbReference type="PANTHER" id="PTHR11469">
    <property type="entry name" value="GLUCOSE-6-PHOSPHATE ISOMERASE"/>
    <property type="match status" value="1"/>
</dbReference>
<dbReference type="PANTHER" id="PTHR11469:SF1">
    <property type="entry name" value="GLUCOSE-6-PHOSPHATE ISOMERASE"/>
    <property type="match status" value="1"/>
</dbReference>
<dbReference type="Pfam" id="PF00342">
    <property type="entry name" value="PGI"/>
    <property type="match status" value="1"/>
</dbReference>
<dbReference type="PRINTS" id="PR00662">
    <property type="entry name" value="G6PISOMERASE"/>
</dbReference>
<dbReference type="SUPFAM" id="SSF53697">
    <property type="entry name" value="SIS domain"/>
    <property type="match status" value="1"/>
</dbReference>
<dbReference type="PROSITE" id="PS00765">
    <property type="entry name" value="P_GLUCOSE_ISOMERASE_1"/>
    <property type="match status" value="1"/>
</dbReference>
<dbReference type="PROSITE" id="PS00174">
    <property type="entry name" value="P_GLUCOSE_ISOMERASE_2"/>
    <property type="match status" value="1"/>
</dbReference>
<dbReference type="PROSITE" id="PS51463">
    <property type="entry name" value="P_GLUCOSE_ISOMERASE_3"/>
    <property type="match status" value="1"/>
</dbReference>
<comment type="function">
    <text evidence="1">Catalyzes the reversible isomerization of glucose-6-phosphate to fructose-6-phosphate.</text>
</comment>
<comment type="catalytic activity">
    <reaction evidence="1">
        <text>alpha-D-glucose 6-phosphate = beta-D-fructose 6-phosphate</text>
        <dbReference type="Rhea" id="RHEA:11816"/>
        <dbReference type="ChEBI" id="CHEBI:57634"/>
        <dbReference type="ChEBI" id="CHEBI:58225"/>
        <dbReference type="EC" id="5.3.1.9"/>
    </reaction>
</comment>
<comment type="pathway">
    <text evidence="1">Carbohydrate biosynthesis; gluconeogenesis.</text>
</comment>
<comment type="pathway">
    <text evidence="1">Carbohydrate degradation; glycolysis; D-glyceraldehyde 3-phosphate and glycerone phosphate from D-glucose: step 2/4.</text>
</comment>
<comment type="subcellular location">
    <subcellularLocation>
        <location evidence="1">Cytoplasm</location>
    </subcellularLocation>
</comment>
<comment type="similarity">
    <text evidence="1">Belongs to the GPI family.</text>
</comment>
<organism>
    <name type="scientific">Escherichia coli O6:K15:H31 (strain 536 / UPEC)</name>
    <dbReference type="NCBI Taxonomy" id="362663"/>
    <lineage>
        <taxon>Bacteria</taxon>
        <taxon>Pseudomonadati</taxon>
        <taxon>Pseudomonadota</taxon>
        <taxon>Gammaproteobacteria</taxon>
        <taxon>Enterobacterales</taxon>
        <taxon>Enterobacteriaceae</taxon>
        <taxon>Escherichia</taxon>
    </lineage>
</organism>